<geneLocation type="chloroplast"/>
<dbReference type="EMBL" id="EU262891">
    <property type="protein sequence ID" value="ABX10160.1"/>
    <property type="molecule type" value="Genomic_DNA"/>
</dbReference>
<dbReference type="RefSeq" id="YP_001687490.1">
    <property type="nucleotide sequence ID" value="NC_010362.1"/>
</dbReference>
<dbReference type="SMR" id="B0Z5G7"/>
<dbReference type="GeneID" id="5955441"/>
<dbReference type="GO" id="GO:0009507">
    <property type="term" value="C:chloroplast"/>
    <property type="evidence" value="ECO:0007669"/>
    <property type="project" value="UniProtKB-SubCell"/>
</dbReference>
<dbReference type="GO" id="GO:0015934">
    <property type="term" value="C:large ribosomal subunit"/>
    <property type="evidence" value="ECO:0007669"/>
    <property type="project" value="InterPro"/>
</dbReference>
<dbReference type="GO" id="GO:0019843">
    <property type="term" value="F:rRNA binding"/>
    <property type="evidence" value="ECO:0007669"/>
    <property type="project" value="UniProtKB-UniRule"/>
</dbReference>
<dbReference type="GO" id="GO:0003735">
    <property type="term" value="F:structural constituent of ribosome"/>
    <property type="evidence" value="ECO:0007669"/>
    <property type="project" value="InterPro"/>
</dbReference>
<dbReference type="GO" id="GO:0006412">
    <property type="term" value="P:translation"/>
    <property type="evidence" value="ECO:0007669"/>
    <property type="project" value="UniProtKB-UniRule"/>
</dbReference>
<dbReference type="CDD" id="cd00336">
    <property type="entry name" value="Ribosomal_L22"/>
    <property type="match status" value="1"/>
</dbReference>
<dbReference type="FunFam" id="3.90.470.10:FF:000006">
    <property type="entry name" value="50S ribosomal protein L22, chloroplastic"/>
    <property type="match status" value="1"/>
</dbReference>
<dbReference type="Gene3D" id="3.90.470.10">
    <property type="entry name" value="Ribosomal protein L22/L17"/>
    <property type="match status" value="1"/>
</dbReference>
<dbReference type="HAMAP" id="MF_01331_B">
    <property type="entry name" value="Ribosomal_uL22_B"/>
    <property type="match status" value="1"/>
</dbReference>
<dbReference type="InterPro" id="IPR001063">
    <property type="entry name" value="Ribosomal_uL22"/>
</dbReference>
<dbReference type="InterPro" id="IPR005727">
    <property type="entry name" value="Ribosomal_uL22_bac/chlpt-type"/>
</dbReference>
<dbReference type="InterPro" id="IPR047867">
    <property type="entry name" value="Ribosomal_uL22_bac/org-type"/>
</dbReference>
<dbReference type="InterPro" id="IPR018260">
    <property type="entry name" value="Ribosomal_uL22_CS"/>
</dbReference>
<dbReference type="InterPro" id="IPR036394">
    <property type="entry name" value="Ribosomal_uL22_sf"/>
</dbReference>
<dbReference type="NCBIfam" id="TIGR01044">
    <property type="entry name" value="rplV_bact"/>
    <property type="match status" value="1"/>
</dbReference>
<dbReference type="PANTHER" id="PTHR13501">
    <property type="entry name" value="CHLOROPLAST 50S RIBOSOMAL PROTEIN L22-RELATED"/>
    <property type="match status" value="1"/>
</dbReference>
<dbReference type="PANTHER" id="PTHR13501:SF10">
    <property type="entry name" value="LARGE RIBOSOMAL SUBUNIT PROTEIN UL22M"/>
    <property type="match status" value="1"/>
</dbReference>
<dbReference type="Pfam" id="PF00237">
    <property type="entry name" value="Ribosomal_L22"/>
    <property type="match status" value="1"/>
</dbReference>
<dbReference type="SUPFAM" id="SSF54843">
    <property type="entry name" value="Ribosomal protein L22"/>
    <property type="match status" value="1"/>
</dbReference>
<dbReference type="PROSITE" id="PS00464">
    <property type="entry name" value="RIBOSOMAL_L22"/>
    <property type="match status" value="1"/>
</dbReference>
<name>RK22_OENPA</name>
<reference key="1">
    <citation type="journal article" date="2008" name="Nucleic Acids Res.">
        <title>The complete nucleotide sequences of the five genetically distinct plastid genomes of Oenothera, subsection Oenothera: I. Sequence evaluation and plastome evolution.</title>
        <authorList>
            <person name="Greiner S."/>
            <person name="Wang X."/>
            <person name="Rauwolf U."/>
            <person name="Silber M.V."/>
            <person name="Mayer K."/>
            <person name="Meurer J."/>
            <person name="Haberer G."/>
            <person name="Herrmann R.G."/>
        </authorList>
    </citation>
    <scope>NUCLEOTIDE SEQUENCE [LARGE SCALE GENOMIC DNA]</scope>
    <source>
        <strain>cv. Atrovirens</strain>
    </source>
</reference>
<organism>
    <name type="scientific">Oenothera parviflora</name>
    <name type="common">Small-flowered evening primrose</name>
    <name type="synonym">Oenothera cruciata</name>
    <dbReference type="NCBI Taxonomy" id="482429"/>
    <lineage>
        <taxon>Eukaryota</taxon>
        <taxon>Viridiplantae</taxon>
        <taxon>Streptophyta</taxon>
        <taxon>Embryophyta</taxon>
        <taxon>Tracheophyta</taxon>
        <taxon>Spermatophyta</taxon>
        <taxon>Magnoliopsida</taxon>
        <taxon>eudicotyledons</taxon>
        <taxon>Gunneridae</taxon>
        <taxon>Pentapetalae</taxon>
        <taxon>rosids</taxon>
        <taxon>malvids</taxon>
        <taxon>Myrtales</taxon>
        <taxon>Onagraceae</taxon>
        <taxon>Onagroideae</taxon>
        <taxon>Onagreae</taxon>
        <taxon>Oenothera</taxon>
    </lineage>
</organism>
<comment type="function">
    <text evidence="1">This protein binds specifically to 23S rRNA.</text>
</comment>
<comment type="function">
    <text evidence="1">The globular domain of the protein is located near the polypeptide exit tunnel on the outside of the subunit, while an extended beta-hairpin is found that lines the wall of the exit tunnel in the center of the 70S ribosome.</text>
</comment>
<comment type="subunit">
    <text evidence="1">Part of the 50S ribosomal subunit.</text>
</comment>
<comment type="subcellular location">
    <subcellularLocation>
        <location>Plastid</location>
        <location>Chloroplast</location>
    </subcellularLocation>
</comment>
<comment type="similarity">
    <text evidence="2">Belongs to the universal ribosomal protein uL22 family.</text>
</comment>
<protein>
    <recommendedName>
        <fullName evidence="2">Large ribosomal subunit protein uL22c</fullName>
    </recommendedName>
    <alternativeName>
        <fullName>50S ribosomal protein L22, chloroplastic</fullName>
    </alternativeName>
</protein>
<evidence type="ECO:0000250" key="1"/>
<evidence type="ECO:0000305" key="2"/>
<feature type="chain" id="PRO_0000354589" description="Large ribosomal subunit protein uL22c">
    <location>
        <begin position="1"/>
        <end position="142"/>
    </location>
</feature>
<gene>
    <name type="primary">rpl22</name>
</gene>
<proteinExistence type="inferred from homology"/>
<accession>B0Z5G7</accession>
<keyword id="KW-0150">Chloroplast</keyword>
<keyword id="KW-0934">Plastid</keyword>
<keyword id="KW-0687">Ribonucleoprotein</keyword>
<keyword id="KW-0689">Ribosomal protein</keyword>
<keyword id="KW-0694">RNA-binding</keyword>
<keyword id="KW-0699">rRNA-binding</keyword>
<sequence length="142" mass="16400">MKKKKTYGEVYALGQYISMSAPKARRVIDQIRGRSYEETLMLLALMPYRACDPILKLVNSAAANARHNMSFNEATLVISKAEVNEGTTVKKLKPRARGRSYPIRRPTCHIRIVLQDTSFDEFEEDFFSLKKDAWEKKIRTKI</sequence>